<organism>
    <name type="scientific">Onion yellows phytoplasma (strain OY-M)</name>
    <dbReference type="NCBI Taxonomy" id="262768"/>
    <lineage>
        <taxon>Bacteria</taxon>
        <taxon>Bacillati</taxon>
        <taxon>Mycoplasmatota</taxon>
        <taxon>Mollicutes</taxon>
        <taxon>Acholeplasmatales</taxon>
        <taxon>Acholeplasmataceae</taxon>
        <taxon>Candidatus Phytoplasma</taxon>
        <taxon>16SrI (Aster yellows group)</taxon>
    </lineage>
</organism>
<evidence type="ECO:0000255" key="1">
    <source>
        <dbReference type="HAMAP-Rule" id="MF_00270"/>
    </source>
</evidence>
<evidence type="ECO:0000305" key="2"/>
<comment type="function">
    <text evidence="1">Binds as a heterodimer with protein bS6 to the central domain of the 16S rRNA, where it helps stabilize the platform of the 30S subunit.</text>
</comment>
<comment type="subunit">
    <text evidence="1">Part of the 30S ribosomal subunit. Forms a tight heterodimer with protein bS6.</text>
</comment>
<comment type="similarity">
    <text evidence="1">Belongs to the bacterial ribosomal protein bS18 family.</text>
</comment>
<feature type="chain" id="PRO_0000111199" description="Small ribosomal subunit protein bS18">
    <location>
        <begin position="1"/>
        <end position="79"/>
    </location>
</feature>
<name>RS18_ONYPE</name>
<reference key="1">
    <citation type="journal article" date="2004" name="Nat. Genet.">
        <title>Reductive evolution suggested from the complete genome sequence of a plant-pathogenic phytoplasma.</title>
        <authorList>
            <person name="Oshima K."/>
            <person name="Kakizawa S."/>
            <person name="Nishigawa H."/>
            <person name="Jung H.-Y."/>
            <person name="Wei W."/>
            <person name="Suzuki S."/>
            <person name="Arashida R."/>
            <person name="Nakata D."/>
            <person name="Miyata S."/>
            <person name="Ugaki M."/>
            <person name="Namba S."/>
        </authorList>
    </citation>
    <scope>NUCLEOTIDE SEQUENCE [LARGE SCALE GENOMIC DNA]</scope>
    <source>
        <strain>OY-M</strain>
    </source>
</reference>
<sequence>MKFNNKKNTFKKRRKVCFFTENKVTKIDFKDIELLQRFITDRGRILSRRVTNTSAKWQRQLAIAIKRARHMALIPFIQQ</sequence>
<keyword id="KW-0687">Ribonucleoprotein</keyword>
<keyword id="KW-0689">Ribosomal protein</keyword>
<keyword id="KW-0694">RNA-binding</keyword>
<keyword id="KW-0699">rRNA-binding</keyword>
<proteinExistence type="inferred from homology"/>
<dbReference type="EMBL" id="AP006628">
    <property type="protein sequence ID" value="BAD04096.1"/>
    <property type="molecule type" value="Genomic_DNA"/>
</dbReference>
<dbReference type="SMR" id="Q6YRK3"/>
<dbReference type="STRING" id="262768.PAM_011"/>
<dbReference type="KEGG" id="poy:PAM_011"/>
<dbReference type="eggNOG" id="COG0238">
    <property type="taxonomic scope" value="Bacteria"/>
</dbReference>
<dbReference type="HOGENOM" id="CLU_148710_2_2_14"/>
<dbReference type="BioCyc" id="OYEL262768:G1G26-16-MONOMER"/>
<dbReference type="Proteomes" id="UP000002523">
    <property type="component" value="Chromosome"/>
</dbReference>
<dbReference type="GO" id="GO:0022627">
    <property type="term" value="C:cytosolic small ribosomal subunit"/>
    <property type="evidence" value="ECO:0007669"/>
    <property type="project" value="TreeGrafter"/>
</dbReference>
<dbReference type="GO" id="GO:0070181">
    <property type="term" value="F:small ribosomal subunit rRNA binding"/>
    <property type="evidence" value="ECO:0007669"/>
    <property type="project" value="TreeGrafter"/>
</dbReference>
<dbReference type="GO" id="GO:0003735">
    <property type="term" value="F:structural constituent of ribosome"/>
    <property type="evidence" value="ECO:0007669"/>
    <property type="project" value="InterPro"/>
</dbReference>
<dbReference type="GO" id="GO:0006412">
    <property type="term" value="P:translation"/>
    <property type="evidence" value="ECO:0007669"/>
    <property type="project" value="UniProtKB-UniRule"/>
</dbReference>
<dbReference type="Gene3D" id="4.10.640.10">
    <property type="entry name" value="Ribosomal protein S18"/>
    <property type="match status" value="1"/>
</dbReference>
<dbReference type="HAMAP" id="MF_00270">
    <property type="entry name" value="Ribosomal_bS18"/>
    <property type="match status" value="1"/>
</dbReference>
<dbReference type="InterPro" id="IPR001648">
    <property type="entry name" value="Ribosomal_bS18"/>
</dbReference>
<dbReference type="InterPro" id="IPR018275">
    <property type="entry name" value="Ribosomal_bS18_CS"/>
</dbReference>
<dbReference type="InterPro" id="IPR036870">
    <property type="entry name" value="Ribosomal_bS18_sf"/>
</dbReference>
<dbReference type="NCBIfam" id="TIGR00165">
    <property type="entry name" value="S18"/>
    <property type="match status" value="1"/>
</dbReference>
<dbReference type="PANTHER" id="PTHR13479">
    <property type="entry name" value="30S RIBOSOMAL PROTEIN S18"/>
    <property type="match status" value="1"/>
</dbReference>
<dbReference type="PANTHER" id="PTHR13479:SF40">
    <property type="entry name" value="SMALL RIBOSOMAL SUBUNIT PROTEIN BS18M"/>
    <property type="match status" value="1"/>
</dbReference>
<dbReference type="Pfam" id="PF01084">
    <property type="entry name" value="Ribosomal_S18"/>
    <property type="match status" value="1"/>
</dbReference>
<dbReference type="PRINTS" id="PR00974">
    <property type="entry name" value="RIBOSOMALS18"/>
</dbReference>
<dbReference type="SUPFAM" id="SSF46911">
    <property type="entry name" value="Ribosomal protein S18"/>
    <property type="match status" value="1"/>
</dbReference>
<dbReference type="PROSITE" id="PS00057">
    <property type="entry name" value="RIBOSOMAL_S18"/>
    <property type="match status" value="1"/>
</dbReference>
<accession>Q6YRK3</accession>
<gene>
    <name evidence="1" type="primary">rpsR</name>
    <name type="ordered locus">PAM_011</name>
</gene>
<protein>
    <recommendedName>
        <fullName evidence="1">Small ribosomal subunit protein bS18</fullName>
    </recommendedName>
    <alternativeName>
        <fullName evidence="2">30S ribosomal protein S18</fullName>
    </alternativeName>
</protein>